<protein>
    <recommendedName>
        <fullName evidence="1">Urease subunit alpha</fullName>
        <ecNumber evidence="1">3.5.1.5</ecNumber>
    </recommendedName>
    <alternativeName>
        <fullName evidence="1">Urea amidohydrolase subunit alpha</fullName>
    </alternativeName>
</protein>
<dbReference type="EC" id="3.5.1.5" evidence="1"/>
<dbReference type="EMBL" id="AP011115">
    <property type="protein sequence ID" value="BAH53987.1"/>
    <property type="molecule type" value="Genomic_DNA"/>
</dbReference>
<dbReference type="RefSeq" id="WP_015889481.1">
    <property type="nucleotide sequence ID" value="NC_012522.1"/>
</dbReference>
<dbReference type="SMR" id="C1AXZ2"/>
<dbReference type="STRING" id="632772.ROP_57400"/>
<dbReference type="MEROPS" id="M38.982"/>
<dbReference type="KEGG" id="rop:ROP_57400"/>
<dbReference type="PATRIC" id="fig|632772.20.peg.5994"/>
<dbReference type="HOGENOM" id="CLU_000980_0_0_11"/>
<dbReference type="OrthoDB" id="9802793at2"/>
<dbReference type="UniPathway" id="UPA00258">
    <property type="reaction ID" value="UER00370"/>
</dbReference>
<dbReference type="Proteomes" id="UP000002212">
    <property type="component" value="Chromosome"/>
</dbReference>
<dbReference type="GO" id="GO:0005737">
    <property type="term" value="C:cytoplasm"/>
    <property type="evidence" value="ECO:0007669"/>
    <property type="project" value="UniProtKB-SubCell"/>
</dbReference>
<dbReference type="GO" id="GO:0016151">
    <property type="term" value="F:nickel cation binding"/>
    <property type="evidence" value="ECO:0007669"/>
    <property type="project" value="UniProtKB-UniRule"/>
</dbReference>
<dbReference type="GO" id="GO:0009039">
    <property type="term" value="F:urease activity"/>
    <property type="evidence" value="ECO:0007669"/>
    <property type="project" value="UniProtKB-UniRule"/>
</dbReference>
<dbReference type="GO" id="GO:0043419">
    <property type="term" value="P:urea catabolic process"/>
    <property type="evidence" value="ECO:0007669"/>
    <property type="project" value="UniProtKB-UniRule"/>
</dbReference>
<dbReference type="CDD" id="cd00375">
    <property type="entry name" value="Urease_alpha"/>
    <property type="match status" value="1"/>
</dbReference>
<dbReference type="Gene3D" id="3.20.20.140">
    <property type="entry name" value="Metal-dependent hydrolases"/>
    <property type="match status" value="1"/>
</dbReference>
<dbReference type="Gene3D" id="2.30.40.10">
    <property type="entry name" value="Urease, subunit C, domain 1"/>
    <property type="match status" value="1"/>
</dbReference>
<dbReference type="HAMAP" id="MF_01953">
    <property type="entry name" value="Urease_alpha"/>
    <property type="match status" value="1"/>
</dbReference>
<dbReference type="InterPro" id="IPR006680">
    <property type="entry name" value="Amidohydro-rel"/>
</dbReference>
<dbReference type="InterPro" id="IPR011059">
    <property type="entry name" value="Metal-dep_hydrolase_composite"/>
</dbReference>
<dbReference type="InterPro" id="IPR032466">
    <property type="entry name" value="Metal_Hydrolase"/>
</dbReference>
<dbReference type="InterPro" id="IPR011612">
    <property type="entry name" value="Urease_alpha_N_dom"/>
</dbReference>
<dbReference type="InterPro" id="IPR050112">
    <property type="entry name" value="Urease_alpha_subunit"/>
</dbReference>
<dbReference type="InterPro" id="IPR017950">
    <property type="entry name" value="Urease_AS"/>
</dbReference>
<dbReference type="InterPro" id="IPR005848">
    <property type="entry name" value="Urease_asu"/>
</dbReference>
<dbReference type="InterPro" id="IPR017951">
    <property type="entry name" value="Urease_asu_c"/>
</dbReference>
<dbReference type="InterPro" id="IPR029754">
    <property type="entry name" value="Urease_Ni-bd"/>
</dbReference>
<dbReference type="NCBIfam" id="NF009685">
    <property type="entry name" value="PRK13206.1"/>
    <property type="match status" value="1"/>
</dbReference>
<dbReference type="NCBIfam" id="NF009686">
    <property type="entry name" value="PRK13207.1"/>
    <property type="match status" value="1"/>
</dbReference>
<dbReference type="NCBIfam" id="TIGR01792">
    <property type="entry name" value="urease_alph"/>
    <property type="match status" value="1"/>
</dbReference>
<dbReference type="PANTHER" id="PTHR43440">
    <property type="entry name" value="UREASE"/>
    <property type="match status" value="1"/>
</dbReference>
<dbReference type="PANTHER" id="PTHR43440:SF1">
    <property type="entry name" value="UREASE"/>
    <property type="match status" value="1"/>
</dbReference>
<dbReference type="Pfam" id="PF01979">
    <property type="entry name" value="Amidohydro_1"/>
    <property type="match status" value="1"/>
</dbReference>
<dbReference type="Pfam" id="PF00449">
    <property type="entry name" value="Urease_alpha"/>
    <property type="match status" value="1"/>
</dbReference>
<dbReference type="PRINTS" id="PR01752">
    <property type="entry name" value="UREASE"/>
</dbReference>
<dbReference type="SUPFAM" id="SSF51338">
    <property type="entry name" value="Composite domain of metallo-dependent hydrolases"/>
    <property type="match status" value="2"/>
</dbReference>
<dbReference type="SUPFAM" id="SSF51556">
    <property type="entry name" value="Metallo-dependent hydrolases"/>
    <property type="match status" value="1"/>
</dbReference>
<dbReference type="PROSITE" id="PS01120">
    <property type="entry name" value="UREASE_1"/>
    <property type="match status" value="1"/>
</dbReference>
<dbReference type="PROSITE" id="PS00145">
    <property type="entry name" value="UREASE_2"/>
    <property type="match status" value="1"/>
</dbReference>
<dbReference type="PROSITE" id="PS51368">
    <property type="entry name" value="UREASE_3"/>
    <property type="match status" value="1"/>
</dbReference>
<reference key="1">
    <citation type="submission" date="2009-03" db="EMBL/GenBank/DDBJ databases">
        <title>Comparison of the complete genome sequences of Rhodococcus erythropolis PR4 and Rhodococcus opacus B4.</title>
        <authorList>
            <person name="Takarada H."/>
            <person name="Sekine M."/>
            <person name="Hosoyama A."/>
            <person name="Yamada R."/>
            <person name="Fujisawa T."/>
            <person name="Omata S."/>
            <person name="Shimizu A."/>
            <person name="Tsukatani N."/>
            <person name="Tanikawa S."/>
            <person name="Fujita N."/>
            <person name="Harayama S."/>
        </authorList>
    </citation>
    <scope>NUCLEOTIDE SEQUENCE [LARGE SCALE GENOMIC DNA]</scope>
    <source>
        <strain>B4</strain>
    </source>
</reference>
<gene>
    <name evidence="1" type="primary">ureC</name>
    <name type="ordered locus">ROP_57400</name>
</gene>
<sequence length="573" mass="60378">MTDLSRARYAELFGPTTGDRIRLADTDLLIEITEDRGGGPGLAGDEAVFGGGKVLRESMGQGRATRAEGAPDTVITGVVVVDHWGIIKADVGIRGGRIVALGKAGNPDTMSGVHPDLVVGPSTEIIAGNGKILTAGGIDCHVHFICPQIMDEALGGGITTMIGGGTGPAEGSKATTVTPGSWHTARMLEALDGWPMNIALLGKGNTVSSESMWEQLRGGVSGFKLHEDWGSTPAAIDACLTVADAAGVQVALHSDTLNEAGFVEDTLAAIAGRAIHAYHTEGAGGGHAPDIITVAAHANVLPSSTNPTRPHTVNTLDEHLDMLMVCHHLSPKIPEDLAFAESRIRPSTIAAEDLLHDLGAISMIGSDSQAMGRIGEVVLRTWQTAHVMKRRRGFLAGDNGADNQRVQRYVAKYTICPAVAHGLEDEIGSVEVGKLADLVLWDPAFFGVRPHAVIKGGMIAWAAMGDANASIPTPQPVLPRPMFGAAPKAAAATSVHFVAPHALEDGLADRLDLSRRLVPVANVRSRGKADMPRNDAQPRIEVDPDTFTVRIDGDVWEEQPAAELPMAQRYFLF</sequence>
<proteinExistence type="inferred from homology"/>
<organism>
    <name type="scientific">Rhodococcus opacus (strain B4)</name>
    <dbReference type="NCBI Taxonomy" id="632772"/>
    <lineage>
        <taxon>Bacteria</taxon>
        <taxon>Bacillati</taxon>
        <taxon>Actinomycetota</taxon>
        <taxon>Actinomycetes</taxon>
        <taxon>Mycobacteriales</taxon>
        <taxon>Nocardiaceae</taxon>
        <taxon>Rhodococcus</taxon>
    </lineage>
</organism>
<feature type="chain" id="PRO_1000188892" description="Urease subunit alpha">
    <location>
        <begin position="1"/>
        <end position="573"/>
    </location>
</feature>
<feature type="domain" description="Urease" evidence="1">
    <location>
        <begin position="136"/>
        <end position="573"/>
    </location>
</feature>
<feature type="active site" description="Proton donor" evidence="1">
    <location>
        <position position="327"/>
    </location>
</feature>
<feature type="binding site" evidence="1">
    <location>
        <position position="141"/>
    </location>
    <ligand>
        <name>Ni(2+)</name>
        <dbReference type="ChEBI" id="CHEBI:49786"/>
        <label>1</label>
    </ligand>
</feature>
<feature type="binding site" evidence="1">
    <location>
        <position position="143"/>
    </location>
    <ligand>
        <name>Ni(2+)</name>
        <dbReference type="ChEBI" id="CHEBI:49786"/>
        <label>1</label>
    </ligand>
</feature>
<feature type="binding site" description="via carbamate group" evidence="1">
    <location>
        <position position="224"/>
    </location>
    <ligand>
        <name>Ni(2+)</name>
        <dbReference type="ChEBI" id="CHEBI:49786"/>
        <label>1</label>
    </ligand>
</feature>
<feature type="binding site" description="via carbamate group" evidence="1">
    <location>
        <position position="224"/>
    </location>
    <ligand>
        <name>Ni(2+)</name>
        <dbReference type="ChEBI" id="CHEBI:49786"/>
        <label>2</label>
    </ligand>
</feature>
<feature type="binding site" evidence="1">
    <location>
        <position position="226"/>
    </location>
    <ligand>
        <name>substrate</name>
    </ligand>
</feature>
<feature type="binding site" evidence="1">
    <location>
        <position position="253"/>
    </location>
    <ligand>
        <name>Ni(2+)</name>
        <dbReference type="ChEBI" id="CHEBI:49786"/>
        <label>2</label>
    </ligand>
</feature>
<feature type="binding site" evidence="1">
    <location>
        <position position="279"/>
    </location>
    <ligand>
        <name>Ni(2+)</name>
        <dbReference type="ChEBI" id="CHEBI:49786"/>
        <label>2</label>
    </ligand>
</feature>
<feature type="binding site" evidence="1">
    <location>
        <position position="367"/>
    </location>
    <ligand>
        <name>Ni(2+)</name>
        <dbReference type="ChEBI" id="CHEBI:49786"/>
        <label>1</label>
    </ligand>
</feature>
<feature type="modified residue" description="N6-carboxylysine" evidence="1">
    <location>
        <position position="224"/>
    </location>
</feature>
<evidence type="ECO:0000255" key="1">
    <source>
        <dbReference type="HAMAP-Rule" id="MF_01953"/>
    </source>
</evidence>
<accession>C1AXZ2</accession>
<comment type="catalytic activity">
    <reaction evidence="1">
        <text>urea + 2 H2O + H(+) = hydrogencarbonate + 2 NH4(+)</text>
        <dbReference type="Rhea" id="RHEA:20557"/>
        <dbReference type="ChEBI" id="CHEBI:15377"/>
        <dbReference type="ChEBI" id="CHEBI:15378"/>
        <dbReference type="ChEBI" id="CHEBI:16199"/>
        <dbReference type="ChEBI" id="CHEBI:17544"/>
        <dbReference type="ChEBI" id="CHEBI:28938"/>
        <dbReference type="EC" id="3.5.1.5"/>
    </reaction>
</comment>
<comment type="cofactor">
    <cofactor evidence="1">
        <name>Ni cation</name>
        <dbReference type="ChEBI" id="CHEBI:25516"/>
    </cofactor>
    <text evidence="1">Binds 2 nickel ions per subunit.</text>
</comment>
<comment type="pathway">
    <text evidence="1">Nitrogen metabolism; urea degradation; CO(2) and NH(3) from urea (urease route): step 1/1.</text>
</comment>
<comment type="subunit">
    <text evidence="1">Heterotrimer of UreA (gamma), UreB (beta) and UreC (alpha) subunits. Three heterotrimers associate to form the active enzyme.</text>
</comment>
<comment type="subcellular location">
    <subcellularLocation>
        <location evidence="1">Cytoplasm</location>
    </subcellularLocation>
</comment>
<comment type="PTM">
    <text evidence="1">Carboxylation allows a single lysine to coordinate two nickel ions.</text>
</comment>
<comment type="similarity">
    <text evidence="1">Belongs to the metallo-dependent hydrolases superfamily. Urease alpha subunit family.</text>
</comment>
<name>URE1_RHOOB</name>
<keyword id="KW-0963">Cytoplasm</keyword>
<keyword id="KW-0378">Hydrolase</keyword>
<keyword id="KW-0479">Metal-binding</keyword>
<keyword id="KW-0533">Nickel</keyword>